<comment type="function">
    <text evidence="8">Probable endoribonuclease involved in the autophagy-mediated degradation of ribosomal RNA and ribosomal proteins in lysosomes.</text>
</comment>
<comment type="catalytic activity">
    <reaction evidence="6">
        <text>a ribonucleotidyl-ribonucleotide-RNA + H2O = a 3'-end 3'-phospho-ribonucleotide-RNA + a 5'-end dephospho-ribonucleoside-RNA + H(+)</text>
        <dbReference type="Rhea" id="RHEA:68052"/>
        <dbReference type="Rhea" id="RHEA-COMP:10463"/>
        <dbReference type="Rhea" id="RHEA-COMP:13936"/>
        <dbReference type="Rhea" id="RHEA-COMP:17355"/>
        <dbReference type="ChEBI" id="CHEBI:15377"/>
        <dbReference type="ChEBI" id="CHEBI:15378"/>
        <dbReference type="ChEBI" id="CHEBI:83062"/>
        <dbReference type="ChEBI" id="CHEBI:138284"/>
        <dbReference type="ChEBI" id="CHEBI:173118"/>
        <dbReference type="EC" id="4.6.1.19"/>
    </reaction>
</comment>
<comment type="subcellular location">
    <subcellularLocation>
        <location evidence="8">Lysosome</location>
    </subcellularLocation>
</comment>
<comment type="tissue specificity">
    <text evidence="8">Expressed in the pharynx, hypodermis, muscle cells, sheath cells, intestinal cells, the vulva and tail regions.</text>
</comment>
<comment type="developmental stage">
    <text evidence="8">Expressed from embryogenesis to adulthood.</text>
</comment>
<comment type="similarity">
    <text evidence="7">Belongs to the RNase T2 family.</text>
</comment>
<organism evidence="11">
    <name type="scientific">Caenorhabditis elegans</name>
    <dbReference type="NCBI Taxonomy" id="6239"/>
    <lineage>
        <taxon>Eukaryota</taxon>
        <taxon>Metazoa</taxon>
        <taxon>Ecdysozoa</taxon>
        <taxon>Nematoda</taxon>
        <taxon>Chromadorea</taxon>
        <taxon>Rhabditida</taxon>
        <taxon>Rhabditina</taxon>
        <taxon>Rhabditomorpha</taxon>
        <taxon>Rhabditoidea</taxon>
        <taxon>Rhabditidae</taxon>
        <taxon>Peloderinae</taxon>
        <taxon>Caenorhabditis</taxon>
    </lineage>
</organism>
<dbReference type="EC" id="4.6.1.19" evidence="6"/>
<dbReference type="EMBL" id="BX284605">
    <property type="protein sequence ID" value="CCD62615.1"/>
    <property type="molecule type" value="Genomic_DNA"/>
</dbReference>
<dbReference type="PIR" id="T33210">
    <property type="entry name" value="T33210"/>
</dbReference>
<dbReference type="PIR" id="T33212">
    <property type="entry name" value="T33212"/>
</dbReference>
<dbReference type="RefSeq" id="NP_503370.1">
    <property type="nucleotide sequence ID" value="NM_070969.7"/>
</dbReference>
<dbReference type="SMR" id="O61887"/>
<dbReference type="FunCoup" id="O61887">
    <property type="interactions" value="545"/>
</dbReference>
<dbReference type="IntAct" id="O61887">
    <property type="interactions" value="1"/>
</dbReference>
<dbReference type="STRING" id="6239.K10C9.3.1"/>
<dbReference type="GlyCosmos" id="O61887">
    <property type="glycosylation" value="1 site, No reported glycans"/>
</dbReference>
<dbReference type="PaxDb" id="6239-K10C9.3"/>
<dbReference type="PeptideAtlas" id="O61887"/>
<dbReference type="EnsemblMetazoa" id="K10C9.3.1">
    <property type="protein sequence ID" value="K10C9.3.1"/>
    <property type="gene ID" value="WBGene00019624"/>
</dbReference>
<dbReference type="GeneID" id="190096"/>
<dbReference type="KEGG" id="cel:CELE_K10C9.3"/>
<dbReference type="UCSC" id="K10C9.3">
    <property type="organism name" value="c. elegans"/>
</dbReference>
<dbReference type="AGR" id="WB:WBGene00019624"/>
<dbReference type="CTD" id="190096"/>
<dbReference type="WormBase" id="K10C9.3">
    <property type="protein sequence ID" value="CE28601"/>
    <property type="gene ID" value="WBGene00019624"/>
    <property type="gene designation" value="rnst-2"/>
</dbReference>
<dbReference type="eggNOG" id="KOG1642">
    <property type="taxonomic scope" value="Eukaryota"/>
</dbReference>
<dbReference type="GeneTree" id="ENSGT00640000091563"/>
<dbReference type="HOGENOM" id="CLU_069912_1_1_1"/>
<dbReference type="InParanoid" id="O61887"/>
<dbReference type="OMA" id="TNCHIGS"/>
<dbReference type="OrthoDB" id="435754at2759"/>
<dbReference type="PhylomeDB" id="O61887"/>
<dbReference type="Reactome" id="R-CEL-6798695">
    <property type="pathway name" value="Neutrophil degranulation"/>
</dbReference>
<dbReference type="PRO" id="PR:O61887"/>
<dbReference type="Proteomes" id="UP000001940">
    <property type="component" value="Chromosome V"/>
</dbReference>
<dbReference type="Bgee" id="WBGene00019624">
    <property type="expression patterns" value="Expressed in embryo and 3 other cell types or tissues"/>
</dbReference>
<dbReference type="GO" id="GO:0005576">
    <property type="term" value="C:extracellular region"/>
    <property type="evidence" value="ECO:0000318"/>
    <property type="project" value="GO_Central"/>
</dbReference>
<dbReference type="GO" id="GO:0005764">
    <property type="term" value="C:lysosome"/>
    <property type="evidence" value="ECO:0007669"/>
    <property type="project" value="UniProtKB-SubCell"/>
</dbReference>
<dbReference type="GO" id="GO:0033897">
    <property type="term" value="F:ribonuclease T2 activity"/>
    <property type="evidence" value="ECO:0007669"/>
    <property type="project" value="UniProtKB-EC"/>
</dbReference>
<dbReference type="GO" id="GO:0003723">
    <property type="term" value="F:RNA binding"/>
    <property type="evidence" value="ECO:0007669"/>
    <property type="project" value="InterPro"/>
</dbReference>
<dbReference type="GO" id="GO:0004521">
    <property type="term" value="F:RNA endonuclease activity"/>
    <property type="evidence" value="ECO:0000318"/>
    <property type="project" value="GO_Central"/>
</dbReference>
<dbReference type="GO" id="GO:0006401">
    <property type="term" value="P:RNA catabolic process"/>
    <property type="evidence" value="ECO:0000318"/>
    <property type="project" value="GO_Central"/>
</dbReference>
<dbReference type="CDD" id="cd01061">
    <property type="entry name" value="RNase_T2_euk"/>
    <property type="match status" value="1"/>
</dbReference>
<dbReference type="Gene3D" id="3.90.730.10">
    <property type="entry name" value="Ribonuclease T2-like"/>
    <property type="match status" value="1"/>
</dbReference>
<dbReference type="InterPro" id="IPR033697">
    <property type="entry name" value="Ribonuclease_T2_eukaryotic"/>
</dbReference>
<dbReference type="InterPro" id="IPR001568">
    <property type="entry name" value="RNase_T2-like"/>
</dbReference>
<dbReference type="InterPro" id="IPR036430">
    <property type="entry name" value="RNase_T2-like_sf"/>
</dbReference>
<dbReference type="InterPro" id="IPR018188">
    <property type="entry name" value="RNase_T2_His_AS_1"/>
</dbReference>
<dbReference type="InterPro" id="IPR033130">
    <property type="entry name" value="RNase_T2_His_AS_2"/>
</dbReference>
<dbReference type="PANTHER" id="PTHR11240">
    <property type="entry name" value="RIBONUCLEASE T2"/>
    <property type="match status" value="1"/>
</dbReference>
<dbReference type="PANTHER" id="PTHR11240:SF22">
    <property type="entry name" value="RIBONUCLEASE T2"/>
    <property type="match status" value="1"/>
</dbReference>
<dbReference type="Pfam" id="PF00445">
    <property type="entry name" value="Ribonuclease_T2"/>
    <property type="match status" value="1"/>
</dbReference>
<dbReference type="SUPFAM" id="SSF55895">
    <property type="entry name" value="Ribonuclease Rh-like"/>
    <property type="match status" value="1"/>
</dbReference>
<dbReference type="PROSITE" id="PS00530">
    <property type="entry name" value="RNASE_T2_1"/>
    <property type="match status" value="1"/>
</dbReference>
<dbReference type="PROSITE" id="PS00531">
    <property type="entry name" value="RNASE_T2_2"/>
    <property type="match status" value="1"/>
</dbReference>
<protein>
    <recommendedName>
        <fullName evidence="9">Ribonuclease T2 protein rnst-2</fullName>
        <ecNumber evidence="6">4.6.1.19</ecNumber>
    </recommendedName>
    <alternativeName>
        <fullName evidence="9">RNase T2 rnst-2</fullName>
    </alternativeName>
</protein>
<reference evidence="11" key="1">
    <citation type="journal article" date="1998" name="Science">
        <title>Genome sequence of the nematode C. elegans: a platform for investigating biology.</title>
        <authorList>
            <consortium name="The C. elegans sequencing consortium"/>
        </authorList>
    </citation>
    <scope>NUCLEOTIDE SEQUENCE [LARGE SCALE GENOMIC DNA]</scope>
    <source>
        <strain evidence="11">Bristol N2</strain>
    </source>
</reference>
<reference evidence="9" key="2">
    <citation type="journal article" date="2018" name="Elife">
        <title>Autophagy-dependent ribosomal RNA degradation is essential for maintaining nucleotide homeostasis during C. elegans development.</title>
        <authorList>
            <person name="Liu Y."/>
            <person name="Zou W."/>
            <person name="Yang P."/>
            <person name="Wang L."/>
            <person name="Ma Y."/>
            <person name="Zhang H."/>
            <person name="Wang X."/>
        </authorList>
    </citation>
    <scope>FUNCTION</scope>
    <scope>SUBCELLULAR LOCATION</scope>
    <scope>TISSUE SPECIFICITY</scope>
    <scope>DEVELOPMENTAL STAGE</scope>
    <scope>MUTAGENESIS OF 56-GLN--ASN-279; HIS-118 AND GLY-119</scope>
</reference>
<accession>O61887</accession>
<evidence type="ECO:0000250" key="1">
    <source>
        <dbReference type="UniProtKB" id="O00584"/>
    </source>
</evidence>
<evidence type="ECO:0000250" key="2">
    <source>
        <dbReference type="UniProtKB" id="P08056"/>
    </source>
</evidence>
<evidence type="ECO:0000255" key="3"/>
<evidence type="ECO:0000255" key="4">
    <source>
        <dbReference type="PROSITE-ProRule" id="PRU00498"/>
    </source>
</evidence>
<evidence type="ECO:0000255" key="5">
    <source>
        <dbReference type="PROSITE-ProRule" id="PRU10045"/>
    </source>
</evidence>
<evidence type="ECO:0000255" key="6">
    <source>
        <dbReference type="PROSITE-ProRule" id="PRU10046"/>
    </source>
</evidence>
<evidence type="ECO:0000255" key="7">
    <source>
        <dbReference type="RuleBase" id="RU004328"/>
    </source>
</evidence>
<evidence type="ECO:0000269" key="8">
    <source>
    </source>
</evidence>
<evidence type="ECO:0000305" key="9"/>
<evidence type="ECO:0000305" key="10">
    <source>
    </source>
</evidence>
<evidence type="ECO:0000312" key="11">
    <source>
        <dbReference type="Proteomes" id="UP000001940"/>
    </source>
</evidence>
<evidence type="ECO:0000312" key="12">
    <source>
        <dbReference type="WormBase" id="K10C9.3"/>
    </source>
</evidence>
<name>RNST2_CAEEL</name>
<feature type="signal peptide" evidence="3">
    <location>
        <begin position="1"/>
        <end position="17"/>
    </location>
</feature>
<feature type="chain" id="PRO_5004159398" description="Ribonuclease T2 protein rnst-2">
    <location>
        <begin position="18"/>
        <end position="279"/>
    </location>
</feature>
<feature type="active site" evidence="5">
    <location>
        <position position="60"/>
    </location>
</feature>
<feature type="active site" evidence="2">
    <location>
        <position position="114"/>
    </location>
</feature>
<feature type="active site" evidence="6 10">
    <location>
        <position position="118"/>
    </location>
</feature>
<feature type="glycosylation site" description="N-linked (GlcNAc...) asparagine" evidence="4">
    <location>
        <position position="68"/>
    </location>
</feature>
<feature type="disulfide bond" evidence="1">
    <location>
        <begin position="37"/>
        <end position="48"/>
    </location>
</feature>
<feature type="disulfide bond" evidence="1">
    <location>
        <begin position="200"/>
        <end position="210"/>
    </location>
</feature>
<feature type="mutagenesis site" description="In bp555; viable, but growth retarded during embryogenesis and have a shorter lifespan. 20-30% of animals exhibit embryonic lethality and 50% of hatched embryos die during larval development. Lysosomal defects characterized by an accumulation of ribosomal RNA and ribosomal proteins in lysosomes throughout development, which results in enlarged lysosomes." evidence="8">
    <location>
        <begin position="56"/>
        <end position="279"/>
    </location>
</feature>
<feature type="mutagenesis site" description="Lysosomal defects; when associated with E-119." evidence="8">
    <original>H</original>
    <variation>A</variation>
    <location>
        <position position="118"/>
    </location>
</feature>
<feature type="mutagenesis site" description="In qx245; viable, but growth retarded during embryogenesis and have a shorter lifespan. 20-30% of animals exhibit embryonic lethality and 50% of hatched embryos die during larval development. Lysosomal defects characterized by an accumulation of ribosomal RNA and ribosomal proteins in lysosomes throughout development, which results in enlarged lysosomes. This defect is suppressed in either an atg-2 bp576, epg-6 bp242 or lgg-1 bp500 mutant background. Lysosomal defects are not rescued; when associated with A-118." evidence="8">
    <original>G</original>
    <variation>E</variation>
    <location>
        <position position="119"/>
    </location>
</feature>
<gene>
    <name evidence="12" type="primary">rnst-2</name>
    <name evidence="12" type="ORF">K10C9.3</name>
</gene>
<keyword id="KW-1015">Disulfide bond</keyword>
<keyword id="KW-0255">Endonuclease</keyword>
<keyword id="KW-0325">Glycoprotein</keyword>
<keyword id="KW-0378">Hydrolase</keyword>
<keyword id="KW-0456">Lyase</keyword>
<keyword id="KW-0458">Lysosome</keyword>
<keyword id="KW-0540">Nuclease</keyword>
<keyword id="KW-1185">Reference proteome</keyword>
<keyword id="KW-0732">Signal</keyword>
<sequence>MKLLLLLCISCIPLAYSHDGEPFDYLMFTTIYPTAVCRADDDSVPESCEIPSGTPQWSIHGLWPNFENGSYPQNCRGTPRHFDENLIKSIEDRLVVVWPNLYPKKTIQSFWKHEYDKHGTCAQSEKLFESELAYFTEVMKVFDSIDVAGGLKSVGPSEKPITSSDLKNALSGVTSGKTFQFHCLRDKKTKQFLLGDIRLCLNKDLTIRDCPTDGKHPNRVSRFERSIGRNRRGPPLPSFQPCPAEFIYLPEMSSISKSSDSTSPSIFGRIWSAIKNIGN</sequence>
<proteinExistence type="evidence at protein level"/>